<organism>
    <name type="scientific">Megasphaera elsdenii</name>
    <dbReference type="NCBI Taxonomy" id="907"/>
    <lineage>
        <taxon>Bacteria</taxon>
        <taxon>Bacillati</taxon>
        <taxon>Bacillota</taxon>
        <taxon>Negativicutes</taxon>
        <taxon>Veillonellales</taxon>
        <taxon>Veillonellaceae</taxon>
        <taxon>Megasphaera</taxon>
    </lineage>
</organism>
<proteinExistence type="evidence at protein level"/>
<dbReference type="PIR" id="A00277">
    <property type="entry name" value="RUME"/>
</dbReference>
<dbReference type="SMR" id="P00271"/>
<dbReference type="GO" id="GO:0009055">
    <property type="term" value="F:electron transfer activity"/>
    <property type="evidence" value="ECO:0007669"/>
    <property type="project" value="InterPro"/>
</dbReference>
<dbReference type="GO" id="GO:0005506">
    <property type="term" value="F:iron ion binding"/>
    <property type="evidence" value="ECO:0007669"/>
    <property type="project" value="InterPro"/>
</dbReference>
<dbReference type="GO" id="GO:0043448">
    <property type="term" value="P:alkane catabolic process"/>
    <property type="evidence" value="ECO:0007669"/>
    <property type="project" value="TreeGrafter"/>
</dbReference>
<dbReference type="CDD" id="cd00730">
    <property type="entry name" value="rubredoxin"/>
    <property type="match status" value="1"/>
</dbReference>
<dbReference type="FunFam" id="2.20.28.10:FF:000001">
    <property type="entry name" value="Rubredoxin"/>
    <property type="match status" value="1"/>
</dbReference>
<dbReference type="Gene3D" id="2.20.28.10">
    <property type="match status" value="1"/>
</dbReference>
<dbReference type="InterPro" id="IPR024922">
    <property type="entry name" value="Rubredoxin"/>
</dbReference>
<dbReference type="InterPro" id="IPR024934">
    <property type="entry name" value="Rubredoxin-like_dom"/>
</dbReference>
<dbReference type="InterPro" id="IPR024935">
    <property type="entry name" value="Rubredoxin_dom"/>
</dbReference>
<dbReference type="InterPro" id="IPR050526">
    <property type="entry name" value="Rubredoxin_ET"/>
</dbReference>
<dbReference type="InterPro" id="IPR018527">
    <property type="entry name" value="Rubredoxin_Fe_BS"/>
</dbReference>
<dbReference type="PANTHER" id="PTHR47627">
    <property type="entry name" value="RUBREDOXIN"/>
    <property type="match status" value="1"/>
</dbReference>
<dbReference type="PANTHER" id="PTHR47627:SF1">
    <property type="entry name" value="RUBREDOXIN-1-RELATED"/>
    <property type="match status" value="1"/>
</dbReference>
<dbReference type="Pfam" id="PF00301">
    <property type="entry name" value="Rubredoxin"/>
    <property type="match status" value="1"/>
</dbReference>
<dbReference type="PIRSF" id="PIRSF000071">
    <property type="entry name" value="Rubredoxin"/>
    <property type="match status" value="1"/>
</dbReference>
<dbReference type="PRINTS" id="PR00163">
    <property type="entry name" value="RUBREDOXIN"/>
</dbReference>
<dbReference type="SUPFAM" id="SSF57802">
    <property type="entry name" value="Rubredoxin-like"/>
    <property type="match status" value="1"/>
</dbReference>
<dbReference type="PROSITE" id="PS00202">
    <property type="entry name" value="RUBREDOXIN"/>
    <property type="match status" value="1"/>
</dbReference>
<dbReference type="PROSITE" id="PS50903">
    <property type="entry name" value="RUBREDOXIN_LIKE"/>
    <property type="match status" value="1"/>
</dbReference>
<comment type="function">
    <text>Rubredoxin is a small nonheme, iron protein lacking acid-labile sulfide. Its single Fe, chelated to 4 Cys, functions as an electron acceptor and may also stabilize the conformation of the molecule.</text>
</comment>
<comment type="cofactor">
    <cofactor>
        <name>Fe(3+)</name>
        <dbReference type="ChEBI" id="CHEBI:29034"/>
    </cofactor>
    <text>Binds 1 Fe(3+) ion per subunit.</text>
</comment>
<comment type="similarity">
    <text evidence="2">Belongs to the rubredoxin family.</text>
</comment>
<protein>
    <recommendedName>
        <fullName>Rubredoxin</fullName>
        <shortName>Rd</shortName>
    </recommendedName>
</protein>
<feature type="chain" id="PRO_0000135041" description="Rubredoxin">
    <location>
        <begin position="1"/>
        <end position="52"/>
    </location>
</feature>
<feature type="domain" description="Rubredoxin-like" evidence="1">
    <location>
        <begin position="1"/>
        <end position="51"/>
    </location>
</feature>
<feature type="binding site">
    <location>
        <position position="6"/>
    </location>
    <ligand>
        <name>Fe cation</name>
        <dbReference type="ChEBI" id="CHEBI:24875"/>
    </ligand>
</feature>
<feature type="binding site">
    <location>
        <position position="9"/>
    </location>
    <ligand>
        <name>Fe cation</name>
        <dbReference type="ChEBI" id="CHEBI:24875"/>
    </ligand>
</feature>
<feature type="binding site">
    <location>
        <position position="38"/>
    </location>
    <ligand>
        <name>Fe cation</name>
        <dbReference type="ChEBI" id="CHEBI:24875"/>
    </ligand>
</feature>
<feature type="binding site">
    <location>
        <position position="41"/>
    </location>
    <ligand>
        <name>Fe cation</name>
        <dbReference type="ChEBI" id="CHEBI:24875"/>
    </ligand>
</feature>
<reference key="1">
    <citation type="journal article" date="1968" name="J. Biol. Chem.">
        <title>Non-heme iron proteins. V. The amino acid sequence of rubredoxin from Peptostreptococcus elsdenii.</title>
        <authorList>
            <person name="Bachmayer H."/>
            <person name="Yasunobu K.T."/>
            <person name="Peel J.L."/>
            <person name="Mayhew S.G."/>
        </authorList>
    </citation>
    <scope>PROTEIN SEQUENCE</scope>
</reference>
<evidence type="ECO:0000255" key="1">
    <source>
        <dbReference type="PROSITE-ProRule" id="PRU00241"/>
    </source>
</evidence>
<evidence type="ECO:0000305" key="2"/>
<keyword id="KW-0903">Direct protein sequencing</keyword>
<keyword id="KW-0249">Electron transport</keyword>
<keyword id="KW-0408">Iron</keyword>
<keyword id="KW-0479">Metal-binding</keyword>
<keyword id="KW-0813">Transport</keyword>
<accession>P00271</accession>
<name>RUBR_MEGEL</name>
<sequence length="52" mass="5616">MDKYECSICGYIYDEAEGDDGNVAAGTKFADLPADWVCPTCGADKDAFVKMD</sequence>